<comment type="function">
    <text evidence="1">Plays a role in efficient localization of neo-synthesized capsids to nuclear replication compartments, thereby controlling cleavage and packaging of virus genomic DNA.</text>
</comment>
<comment type="subcellular location">
    <subcellularLocation>
        <location evidence="1">Host cytoplasm</location>
    </subcellularLocation>
    <subcellularLocation>
        <location evidence="1">Host nucleus</location>
    </subcellularLocation>
</comment>
<comment type="similarity">
    <text evidence="4">Belongs to the herpesviridae UL32 protein family.</text>
</comment>
<dbReference type="EMBL" id="AY446894">
    <property type="protein sequence ID" value="AAR31618.1"/>
    <property type="molecule type" value="Genomic_DNA"/>
</dbReference>
<dbReference type="RefSeq" id="YP_081511.1">
    <property type="nucleotide sequence ID" value="NC_006273.2"/>
</dbReference>
<dbReference type="SMR" id="Q6SW79"/>
<dbReference type="DNASU" id="3077432"/>
<dbReference type="GeneID" id="3077432"/>
<dbReference type="KEGG" id="vg:3077432"/>
<dbReference type="Reactome" id="R-HSA-9610379">
    <property type="pathway name" value="HCMV Late Events"/>
</dbReference>
<dbReference type="Proteomes" id="UP000000938">
    <property type="component" value="Segment"/>
</dbReference>
<dbReference type="GO" id="GO:0030430">
    <property type="term" value="C:host cell cytoplasm"/>
    <property type="evidence" value="ECO:0007669"/>
    <property type="project" value="UniProtKB-SubCell"/>
</dbReference>
<dbReference type="GO" id="GO:0042025">
    <property type="term" value="C:host cell nucleus"/>
    <property type="evidence" value="ECO:0007669"/>
    <property type="project" value="UniProtKB-SubCell"/>
</dbReference>
<dbReference type="GO" id="GO:0019031">
    <property type="term" value="C:viral envelope"/>
    <property type="evidence" value="ECO:0007669"/>
    <property type="project" value="InterPro"/>
</dbReference>
<dbReference type="GO" id="GO:0008270">
    <property type="term" value="F:zinc ion binding"/>
    <property type="evidence" value="ECO:0007669"/>
    <property type="project" value="UniProtKB-KW"/>
</dbReference>
<dbReference type="InterPro" id="IPR002597">
    <property type="entry name" value="Herpes_env"/>
</dbReference>
<dbReference type="Pfam" id="PF01673">
    <property type="entry name" value="Herpes_env"/>
    <property type="match status" value="2"/>
</dbReference>
<dbReference type="PROSITE" id="PS51988">
    <property type="entry name" value="HERPESVIRUS_UL32"/>
    <property type="match status" value="1"/>
</dbReference>
<organismHost>
    <name type="scientific">Homo sapiens</name>
    <name type="common">Human</name>
    <dbReference type="NCBI Taxonomy" id="9606"/>
</organismHost>
<gene>
    <name type="primary">UL52</name>
</gene>
<name>UL52_HCMVM</name>
<proteinExistence type="inferred from homology"/>
<protein>
    <recommendedName>
        <fullName>Packaging protein UL32 homolog</fullName>
    </recommendedName>
</protein>
<sequence>MNPSTHVSSNGPTTPPHGPHTTFLPPTSPAPSTSSVAAATLCSPQRQAVSRYSGWSTEYTQWHSDLTTELLWHAHPRQVPMDEALAAAAAASYQVNPQHPANRYRHYEFQTLSLGTSEVDELLNCCAEETTCGGTQSTVLTNATNTTSCGGAVAGSSNAGPAGASAACDLDAELAGLETSAADFEQLRRLCAPLAIDTRCNLCAIISICLKQDCDQSWLLEYSLLCFKCSYAPRAALSTLIIMSEFTHLLQQHFSDLRIDDLFRHHVLTVFDFHLHFFINRCFEKQVGDAVDNENVTLNHLAVVRAMVMGEDTVPYNKPRRHPQQKQKNNPYHVEVPQELIDNFLEHSSPSRDRFVQLLFYMWAGTGVMSTTPLTELTHTKFARLDALSTASEREDARMMMEEEEDEEGGEKGGDDPGRHNGGGTSGGFSESTLKKNVGPIYLCPVPAFFTKNQTSTVCLLCELMACSYYDNVVLRELYRRVVSYCQNNVKMVDRIQLVLADLLRECTSPLGAAHEDVARCGLEAPTSPGGDSDYHGLSGVDGALARPDPVFCHVLRQAGVTGIYKHFFCDPQCAGNIRVTNEAVLFGHLHPHHVQEVKLAICHDNYYISRLPRRVWLCITLFKAFQITKRTYKGKVHLADFMRDFTQLLENCDIKLVDPTYVIDKYV</sequence>
<accession>Q6SW79</accession>
<accession>D2K3M0</accession>
<evidence type="ECO:0000250" key="1"/>
<evidence type="ECO:0000255" key="2">
    <source>
        <dbReference type="PROSITE-ProRule" id="PRU01332"/>
    </source>
</evidence>
<evidence type="ECO:0000256" key="3">
    <source>
        <dbReference type="SAM" id="MobiDB-lite"/>
    </source>
</evidence>
<evidence type="ECO:0000305" key="4"/>
<organism>
    <name type="scientific">Human cytomegalovirus (strain Merlin)</name>
    <name type="common">HHV-5</name>
    <name type="synonym">Human herpesvirus 5</name>
    <dbReference type="NCBI Taxonomy" id="295027"/>
    <lineage>
        <taxon>Viruses</taxon>
        <taxon>Duplodnaviria</taxon>
        <taxon>Heunggongvirae</taxon>
        <taxon>Peploviricota</taxon>
        <taxon>Herviviricetes</taxon>
        <taxon>Herpesvirales</taxon>
        <taxon>Orthoherpesviridae</taxon>
        <taxon>Betaherpesvirinae</taxon>
        <taxon>Cytomegalovirus</taxon>
        <taxon>Cytomegalovirus humanbeta5</taxon>
        <taxon>Human cytomegalovirus</taxon>
    </lineage>
</organism>
<keyword id="KW-1035">Host cytoplasm</keyword>
<keyword id="KW-1048">Host nucleus</keyword>
<keyword id="KW-0479">Metal-binding</keyword>
<keyword id="KW-1185">Reference proteome</keyword>
<keyword id="KW-0862">Zinc</keyword>
<keyword id="KW-0863">Zinc-finger</keyword>
<feature type="chain" id="PRO_0000418287" description="Packaging protein UL32 homolog">
    <location>
        <begin position="1"/>
        <end position="668"/>
    </location>
</feature>
<feature type="region of interest" description="Disordered" evidence="3">
    <location>
        <begin position="1"/>
        <end position="35"/>
    </location>
</feature>
<feature type="region of interest" description="Zinc finger 1" evidence="2">
    <location>
        <begin position="200"/>
        <end position="282"/>
    </location>
</feature>
<feature type="region of interest" description="Disordered" evidence="3">
    <location>
        <begin position="392"/>
        <end position="430"/>
    </location>
</feature>
<feature type="region of interest" description="Zinc finger 2" evidence="2">
    <location>
        <begin position="459"/>
        <end position="574"/>
    </location>
</feature>
<feature type="compositionally biased region" description="Polar residues" evidence="3">
    <location>
        <begin position="1"/>
        <end position="10"/>
    </location>
</feature>
<feature type="compositionally biased region" description="Low complexity" evidence="3">
    <location>
        <begin position="19"/>
        <end position="35"/>
    </location>
</feature>
<feature type="compositionally biased region" description="Basic and acidic residues" evidence="3">
    <location>
        <begin position="392"/>
        <end position="401"/>
    </location>
</feature>
<feature type="compositionally biased region" description="Basic and acidic residues" evidence="3">
    <location>
        <begin position="410"/>
        <end position="419"/>
    </location>
</feature>
<feature type="binding site" evidence="2">
    <location>
        <position position="200"/>
    </location>
    <ligand>
        <name>Zn(2+)</name>
        <dbReference type="ChEBI" id="CHEBI:29105"/>
        <label>1</label>
    </ligand>
</feature>
<feature type="binding site" evidence="2">
    <location>
        <position position="203"/>
    </location>
    <ligand>
        <name>Zn(2+)</name>
        <dbReference type="ChEBI" id="CHEBI:29105"/>
        <label>1</label>
    </ligand>
</feature>
<feature type="binding site" evidence="2">
    <location>
        <position position="276"/>
    </location>
    <ligand>
        <name>Zn(2+)</name>
        <dbReference type="ChEBI" id="CHEBI:29105"/>
        <label>1</label>
    </ligand>
</feature>
<feature type="binding site" evidence="2">
    <location>
        <position position="282"/>
    </location>
    <ligand>
        <name>Zn(2+)</name>
        <dbReference type="ChEBI" id="CHEBI:29105"/>
        <label>1</label>
    </ligand>
</feature>
<feature type="binding site" evidence="2">
    <location>
        <position position="459"/>
    </location>
    <ligand>
        <name>Zn(2+)</name>
        <dbReference type="ChEBI" id="CHEBI:29105"/>
        <label>2</label>
    </ligand>
</feature>
<feature type="binding site" evidence="2">
    <location>
        <position position="462"/>
    </location>
    <ligand>
        <name>Zn(2+)</name>
        <dbReference type="ChEBI" id="CHEBI:29105"/>
        <label>2</label>
    </ligand>
</feature>
<feature type="binding site" evidence="2">
    <location>
        <position position="567"/>
    </location>
    <ligand>
        <name>Zn(2+)</name>
        <dbReference type="ChEBI" id="CHEBI:29105"/>
        <label>2</label>
    </ligand>
</feature>
<feature type="binding site" evidence="2">
    <location>
        <position position="574"/>
    </location>
    <ligand>
        <name>Zn(2+)</name>
        <dbReference type="ChEBI" id="CHEBI:29105"/>
        <label>2</label>
    </ligand>
</feature>
<reference key="1">
    <citation type="journal article" date="2004" name="J. Gen. Virol.">
        <title>Genetic content of wild-type human cytomegalovirus.</title>
        <authorList>
            <person name="Dolan A."/>
            <person name="Cunningham C."/>
            <person name="Hector R.D."/>
            <person name="Hassan-Walker A.F."/>
            <person name="Lee L."/>
            <person name="Addison C."/>
            <person name="Dargan D.J."/>
            <person name="McGeoch D.J."/>
            <person name="Gatherer D."/>
            <person name="Emery V.C."/>
            <person name="Griffiths P.D."/>
            <person name="Sinzger C."/>
            <person name="McSharry B.P."/>
            <person name="Wilkinson G.W.G."/>
            <person name="Davison A.J."/>
        </authorList>
    </citation>
    <scope>NUCLEOTIDE SEQUENCE [LARGE SCALE GENOMIC DNA]</scope>
</reference>